<proteinExistence type="evidence at protein level"/>
<sequence length="403" mass="44419">MGSLSDSTPLMKDVQGIRKAQKADGTATVMAIGTAHPPHIISQDSYADFYFRVTNSEHKVELKKKFDRICKKTMIGKRYFNFDEEFLKKYPNITSFDKPSLNDRHDICIPGVPALGAEAAVKAIEEWGRPKSEITHLVFCTSGGVDMPSADFQCAKLLGLRTNVNKYCIYMQGCYAGGTVMRYAKDLAENNRGARVLMVCAELTIIALRGPNDSHIDNAIGNSLFGDGAAALIVGSDPIIGVEKPMFEIVCAKQTVIPNSEEVIHLHLRESGLMFYMTKDSAATISNNIEACLVDVFKSVGMTPPEDWNSLFWIPHPGGRAILDQVEAKLKLRPEKFSATRTVLWDYGNMISACVLYILDEMRRKSAAEGLETYGEGLEWGVLLGFGPGMTIETILLHSLPPV</sequence>
<keyword id="KW-0012">Acyltransferase</keyword>
<keyword id="KW-0284">Flavonoid biosynthesis</keyword>
<keyword id="KW-0808">Transferase</keyword>
<accession>C4MBZ5</accession>
<organism>
    <name type="scientific">Aloe arborescens</name>
    <name type="common">Kidachi aloe</name>
    <dbReference type="NCBI Taxonomy" id="45385"/>
    <lineage>
        <taxon>Eukaryota</taxon>
        <taxon>Viridiplantae</taxon>
        <taxon>Streptophyta</taxon>
        <taxon>Embryophyta</taxon>
        <taxon>Tracheophyta</taxon>
        <taxon>Spermatophyta</taxon>
        <taxon>Magnoliopsida</taxon>
        <taxon>Liliopsida</taxon>
        <taxon>Asparagales</taxon>
        <taxon>Asphodelaceae</taxon>
        <taxon>Asphodeloideae</taxon>
        <taxon>Aloe</taxon>
    </lineage>
</organism>
<protein>
    <recommendedName>
        <fullName>Aloesone synthase</fullName>
        <ecNumber>2.3.1.-</ecNumber>
    </recommendedName>
    <alternativeName>
        <fullName>Polyketide synthase 3</fullName>
    </alternativeName>
</protein>
<name>PKS3_ALOAR</name>
<evidence type="ECO:0000250" key="1"/>
<evidence type="ECO:0000269" key="2">
    <source>
    </source>
</evidence>
<evidence type="ECO:0000305" key="3"/>
<reference key="1">
    <citation type="journal article" date="2009" name="FEBS J.">
        <title>Novel type III polyketide synthases from Aloe arborescens.</title>
        <authorList>
            <person name="Mizuuchi Y."/>
            <person name="Shi S.P."/>
            <person name="Wanibuchi K."/>
            <person name="Kojima A."/>
            <person name="Morita H."/>
            <person name="Noguchi H."/>
            <person name="Abe I."/>
        </authorList>
    </citation>
    <scope>NUCLEOTIDE SEQUENCE [MRNA]</scope>
    <scope>FUNCTION</scope>
    <scope>CATALYTIC ACTIVITY</scope>
    <scope>BIOPHYSICOCHEMICAL PROPERTIES</scope>
    <scope>MUTAGENESIS OF ALA-207</scope>
</reference>
<dbReference type="EC" id="2.3.1.-"/>
<dbReference type="EMBL" id="EF537574">
    <property type="protein sequence ID" value="ABS72373.1"/>
    <property type="molecule type" value="mRNA"/>
</dbReference>
<dbReference type="SMR" id="C4MBZ5"/>
<dbReference type="BioCyc" id="MetaCyc:MONOMER-15005"/>
<dbReference type="UniPathway" id="UPA00154"/>
<dbReference type="GO" id="GO:0016747">
    <property type="term" value="F:acyltransferase activity, transferring groups other than amino-acyl groups"/>
    <property type="evidence" value="ECO:0000314"/>
    <property type="project" value="UniProtKB"/>
</dbReference>
<dbReference type="GO" id="GO:0009813">
    <property type="term" value="P:flavonoid biosynthetic process"/>
    <property type="evidence" value="ECO:0000314"/>
    <property type="project" value="UniProtKB"/>
</dbReference>
<dbReference type="GO" id="GO:0030639">
    <property type="term" value="P:polyketide biosynthetic process"/>
    <property type="evidence" value="ECO:0007669"/>
    <property type="project" value="TreeGrafter"/>
</dbReference>
<dbReference type="CDD" id="cd00831">
    <property type="entry name" value="CHS_like"/>
    <property type="match status" value="1"/>
</dbReference>
<dbReference type="FunFam" id="3.40.47.10:FF:000014">
    <property type="entry name" value="Chalcone synthase 1"/>
    <property type="match status" value="1"/>
</dbReference>
<dbReference type="FunFam" id="3.40.47.10:FF:000025">
    <property type="entry name" value="Chalcone synthase 2"/>
    <property type="match status" value="1"/>
</dbReference>
<dbReference type="Gene3D" id="3.40.47.10">
    <property type="match status" value="2"/>
</dbReference>
<dbReference type="InterPro" id="IPR012328">
    <property type="entry name" value="Chalcone/stilbene_synt_C"/>
</dbReference>
<dbReference type="InterPro" id="IPR001099">
    <property type="entry name" value="Chalcone/stilbene_synt_N"/>
</dbReference>
<dbReference type="InterPro" id="IPR011141">
    <property type="entry name" value="Polyketide_synthase_type-III"/>
</dbReference>
<dbReference type="InterPro" id="IPR016039">
    <property type="entry name" value="Thiolase-like"/>
</dbReference>
<dbReference type="PANTHER" id="PTHR11877:SF80">
    <property type="entry name" value="CHALCONE SYNTHASE 1"/>
    <property type="match status" value="1"/>
</dbReference>
<dbReference type="PANTHER" id="PTHR11877">
    <property type="entry name" value="HYDROXYMETHYLGLUTARYL-COA SYNTHASE"/>
    <property type="match status" value="1"/>
</dbReference>
<dbReference type="Pfam" id="PF02797">
    <property type="entry name" value="Chal_sti_synt_C"/>
    <property type="match status" value="1"/>
</dbReference>
<dbReference type="Pfam" id="PF00195">
    <property type="entry name" value="Chal_sti_synt_N"/>
    <property type="match status" value="1"/>
</dbReference>
<dbReference type="PIRSF" id="PIRSF000451">
    <property type="entry name" value="PKS_III"/>
    <property type="match status" value="1"/>
</dbReference>
<dbReference type="SUPFAM" id="SSF53901">
    <property type="entry name" value="Thiolase-like"/>
    <property type="match status" value="2"/>
</dbReference>
<gene>
    <name type="primary">PKS3</name>
</gene>
<comment type="function">
    <text evidence="2">Catalyzes the iterative condensations of 6, 7 or 8 molecules of malonyl-CoA to produce various aromatic polyketides. Produces the heptaketide aloesone, the aglycone of aloesin, from 7 molecules of malonyl-CoA as a major product. Also able to produce a hexaketide pyrone, a heptaketide 6-(2-acetyl-3,5-dihydroxybenzyl)-4-hydroxy-2-pyrone, a novel heptaketide 6-(2-(2,4-dihydroxy-6-methylphenyl)-2-oxoethyl)-4-hydroxy-2-pyrone and octaketides SEK4/SEK4b.</text>
</comment>
<comment type="biophysicochemical properties">
    <kinetics>
        <KM evidence="2">88 uM for malonyl-CoA</KM>
        <text>kcat is 0.0075 min(-1).</text>
    </kinetics>
    <phDependence>
        <text evidence="2">Optimum pH is 6.0.</text>
    </phDependence>
</comment>
<comment type="pathway">
    <text>Secondary metabolite biosynthesis; flavonoid biosynthesis.</text>
</comment>
<comment type="subunit">
    <text evidence="1">Homodimer.</text>
</comment>
<comment type="miscellaneous">
    <text>A.arborescens is a medicinal plant rich in aromatic polyketides, such as pharmaceutically important aloenin (hexaketide), aloesin (heptaketide) and barbaloin (octaketide).</text>
</comment>
<comment type="similarity">
    <text evidence="3">Belongs to the thiolase-like superfamily. Chalcone/stilbene synthases family.</text>
</comment>
<feature type="chain" id="PRO_0000422576" description="Aloesone synthase">
    <location>
        <begin position="1"/>
        <end position="403"/>
    </location>
</feature>
<feature type="active site" evidence="1">
    <location>
        <position position="174"/>
    </location>
</feature>
<feature type="binding site" evidence="1">
    <location>
        <position position="281"/>
    </location>
    <ligand>
        <name>CoA</name>
        <dbReference type="ChEBI" id="CHEBI:57287"/>
    </ligand>
</feature>
<feature type="binding site" evidence="1">
    <location>
        <begin position="318"/>
        <end position="321"/>
    </location>
    <ligand>
        <name>CoA</name>
        <dbReference type="ChEBI" id="CHEBI:57287"/>
    </ligand>
</feature>
<feature type="site" description="Determines the polyketide chain length and product specificity">
    <location>
        <position position="207"/>
    </location>
</feature>
<feature type="mutagenesis site" description="Turns into a octaketide synthase." evidence="2">
    <original>A</original>
    <variation>G</variation>
    <location>
        <position position="207"/>
    </location>
</feature>
<feature type="mutagenesis site" description="Turns into a pentaketide synthase." evidence="2">
    <original>A</original>
    <variation>M</variation>
    <location>
        <position position="207"/>
    </location>
</feature>